<evidence type="ECO:0000255" key="1">
    <source>
        <dbReference type="HAMAP-Rule" id="MF_00142"/>
    </source>
</evidence>
<dbReference type="EMBL" id="CP000970">
    <property type="protein sequence ID" value="ACB17472.1"/>
    <property type="molecule type" value="Genomic_DNA"/>
</dbReference>
<dbReference type="RefSeq" id="WP_000999950.1">
    <property type="nucleotide sequence ID" value="NC_010498.1"/>
</dbReference>
<dbReference type="BMRB" id="B1LLX7"/>
<dbReference type="SMR" id="B1LLX7"/>
<dbReference type="KEGG" id="ecm:EcSMS35_4172"/>
<dbReference type="HOGENOM" id="CLU_080880_3_0_6"/>
<dbReference type="Proteomes" id="UP000007011">
    <property type="component" value="Chromosome"/>
</dbReference>
<dbReference type="GO" id="GO:0005829">
    <property type="term" value="C:cytosol"/>
    <property type="evidence" value="ECO:0007669"/>
    <property type="project" value="TreeGrafter"/>
</dbReference>
<dbReference type="GO" id="GO:0008199">
    <property type="term" value="F:ferric iron binding"/>
    <property type="evidence" value="ECO:0007669"/>
    <property type="project" value="InterPro"/>
</dbReference>
<dbReference type="GO" id="GO:0008198">
    <property type="term" value="F:ferrous iron binding"/>
    <property type="evidence" value="ECO:0007669"/>
    <property type="project" value="TreeGrafter"/>
</dbReference>
<dbReference type="GO" id="GO:0016226">
    <property type="term" value="P:iron-sulfur cluster assembly"/>
    <property type="evidence" value="ECO:0007669"/>
    <property type="project" value="UniProtKB-UniRule"/>
</dbReference>
<dbReference type="CDD" id="cd00503">
    <property type="entry name" value="Frataxin"/>
    <property type="match status" value="1"/>
</dbReference>
<dbReference type="FunFam" id="3.30.920.10:FF:000001">
    <property type="entry name" value="Iron-sulfur cluster assembly protein CyaY"/>
    <property type="match status" value="1"/>
</dbReference>
<dbReference type="Gene3D" id="3.30.920.10">
    <property type="entry name" value="Frataxin/CyaY"/>
    <property type="match status" value="1"/>
</dbReference>
<dbReference type="HAMAP" id="MF_00142">
    <property type="entry name" value="CyaY"/>
    <property type="match status" value="1"/>
</dbReference>
<dbReference type="InterPro" id="IPR047584">
    <property type="entry name" value="CyaY"/>
</dbReference>
<dbReference type="InterPro" id="IPR002908">
    <property type="entry name" value="Frataxin/CyaY"/>
</dbReference>
<dbReference type="InterPro" id="IPR036524">
    <property type="entry name" value="Frataxin/CyaY_sf"/>
</dbReference>
<dbReference type="InterPro" id="IPR020895">
    <property type="entry name" value="Frataxin_CS"/>
</dbReference>
<dbReference type="NCBIfam" id="TIGR03421">
    <property type="entry name" value="FeS_CyaY"/>
    <property type="match status" value="1"/>
</dbReference>
<dbReference type="PANTHER" id="PTHR16821">
    <property type="entry name" value="FRATAXIN"/>
    <property type="match status" value="1"/>
</dbReference>
<dbReference type="PANTHER" id="PTHR16821:SF2">
    <property type="entry name" value="FRATAXIN, MITOCHONDRIAL"/>
    <property type="match status" value="1"/>
</dbReference>
<dbReference type="Pfam" id="PF01491">
    <property type="entry name" value="Frataxin_Cyay"/>
    <property type="match status" value="1"/>
</dbReference>
<dbReference type="SMART" id="SM01219">
    <property type="entry name" value="Frataxin_Cyay"/>
    <property type="match status" value="1"/>
</dbReference>
<dbReference type="SUPFAM" id="SSF55387">
    <property type="entry name" value="Frataxin/Nqo15-like"/>
    <property type="match status" value="1"/>
</dbReference>
<dbReference type="PROSITE" id="PS01344">
    <property type="entry name" value="FRATAXIN_1"/>
    <property type="match status" value="1"/>
</dbReference>
<dbReference type="PROSITE" id="PS50810">
    <property type="entry name" value="FRATAXIN_2"/>
    <property type="match status" value="1"/>
</dbReference>
<comment type="function">
    <text evidence="1">Involved in iron-sulfur (Fe-S) cluster assembly. May act as a regulator of Fe-S biogenesis.</text>
</comment>
<comment type="similarity">
    <text evidence="1">Belongs to the frataxin family.</text>
</comment>
<reference key="1">
    <citation type="journal article" date="2008" name="J. Bacteriol.">
        <title>Insights into the environmental resistance gene pool from the genome sequence of the multidrug-resistant environmental isolate Escherichia coli SMS-3-5.</title>
        <authorList>
            <person name="Fricke W.F."/>
            <person name="Wright M.S."/>
            <person name="Lindell A.H."/>
            <person name="Harkins D.M."/>
            <person name="Baker-Austin C."/>
            <person name="Ravel J."/>
            <person name="Stepanauskas R."/>
        </authorList>
    </citation>
    <scope>NUCLEOTIDE SEQUENCE [LARGE SCALE GENOMIC DNA]</scope>
    <source>
        <strain>SMS-3-5 / SECEC</strain>
    </source>
</reference>
<name>CYAY_ECOSM</name>
<accession>B1LLX7</accession>
<proteinExistence type="inferred from homology"/>
<gene>
    <name evidence="1" type="primary">cyaY</name>
    <name type="ordered locus">EcSMS35_4172</name>
</gene>
<feature type="chain" id="PRO_1000190054" description="Iron-sulfur cluster assembly protein CyaY">
    <location>
        <begin position="1"/>
        <end position="106"/>
    </location>
</feature>
<protein>
    <recommendedName>
        <fullName evidence="1">Iron-sulfur cluster assembly protein CyaY</fullName>
    </recommendedName>
</protein>
<keyword id="KW-0408">Iron</keyword>
<keyword id="KW-0479">Metal-binding</keyword>
<sequence length="106" mass="12249">MNDSEFHRLADQLWLTIEERLDDWDGDSDIDCEINGGVLTITFENGSKIIINRQEPLHQVWLATKQGGYHFDMKGDEWICDRSGETFWDLLEQAATQQAGETVSFR</sequence>
<organism>
    <name type="scientific">Escherichia coli (strain SMS-3-5 / SECEC)</name>
    <dbReference type="NCBI Taxonomy" id="439855"/>
    <lineage>
        <taxon>Bacteria</taxon>
        <taxon>Pseudomonadati</taxon>
        <taxon>Pseudomonadota</taxon>
        <taxon>Gammaproteobacteria</taxon>
        <taxon>Enterobacterales</taxon>
        <taxon>Enterobacteriaceae</taxon>
        <taxon>Escherichia</taxon>
    </lineage>
</organism>